<protein>
    <recommendedName>
        <fullName>Voltage-gated potassium channel Kch</fullName>
    </recommendedName>
</protein>
<keyword id="KW-0002">3D-structure</keyword>
<keyword id="KW-0997">Cell inner membrane</keyword>
<keyword id="KW-1003">Cell membrane</keyword>
<keyword id="KW-0407">Ion channel</keyword>
<keyword id="KW-0406">Ion transport</keyword>
<keyword id="KW-0472">Membrane</keyword>
<keyword id="KW-1185">Reference proteome</keyword>
<keyword id="KW-0812">Transmembrane</keyword>
<keyword id="KW-1133">Transmembrane helix</keyword>
<keyword id="KW-0813">Transport</keyword>
<name>KCH_ECOLI</name>
<evidence type="ECO:0000255" key="1"/>
<evidence type="ECO:0000255" key="2">
    <source>
        <dbReference type="PROSITE-ProRule" id="PRU00543"/>
    </source>
</evidence>
<evidence type="ECO:0000269" key="3">
    <source>
    </source>
</evidence>
<evidence type="ECO:0000269" key="4">
    <source>
    </source>
</evidence>
<evidence type="ECO:0000269" key="5">
    <source>
    </source>
</evidence>
<evidence type="ECO:0000269" key="6">
    <source>
    </source>
</evidence>
<evidence type="ECO:0000305" key="7"/>
<evidence type="ECO:0007829" key="8">
    <source>
        <dbReference type="PDB" id="1ID1"/>
    </source>
</evidence>
<proteinExistence type="evidence at protein level"/>
<organism>
    <name type="scientific">Escherichia coli (strain K12)</name>
    <dbReference type="NCBI Taxonomy" id="83333"/>
    <lineage>
        <taxon>Bacteria</taxon>
        <taxon>Pseudomonadati</taxon>
        <taxon>Pseudomonadota</taxon>
        <taxon>Gammaproteobacteria</taxon>
        <taxon>Enterobacterales</taxon>
        <taxon>Enterobacteriaceae</taxon>
        <taxon>Escherichia</taxon>
    </lineage>
</organism>
<comment type="function">
    <text evidence="3 5">K(+)-specific ion channel. May play a role in the defense against osmotic shock.</text>
</comment>
<comment type="subunit">
    <text>Dimer.</text>
</comment>
<comment type="subcellular location">
    <subcellularLocation>
        <location evidence="6">Cell inner membrane</location>
        <topology evidence="6">Multi-pass membrane protein</topology>
    </subcellularLocation>
</comment>
<comment type="similarity">
    <text evidence="7">Belongs to the potassium channel family.</text>
</comment>
<feature type="chain" id="PRO_0000054096" description="Voltage-gated potassium channel Kch">
    <location>
        <begin position="1"/>
        <end position="417"/>
    </location>
</feature>
<feature type="topological domain" description="Cytoplasmic" evidence="1">
    <location>
        <begin position="1"/>
        <end position="21"/>
    </location>
</feature>
<feature type="transmembrane region" description="Helical; Name=1" evidence="1">
    <location>
        <begin position="22"/>
        <end position="41"/>
    </location>
</feature>
<feature type="topological domain" description="Periplasmic" evidence="1">
    <location>
        <begin position="42"/>
        <end position="63"/>
    </location>
</feature>
<feature type="transmembrane region" description="Helical; Name=2" evidence="1">
    <location>
        <begin position="64"/>
        <end position="83"/>
    </location>
</feature>
<feature type="topological domain" description="Cytoplasmic" evidence="1">
    <location>
        <begin position="84"/>
        <end position="86"/>
    </location>
</feature>
<feature type="transmembrane region" description="Helical; Name=3" evidence="1">
    <location>
        <begin position="87"/>
        <end position="104"/>
    </location>
</feature>
<feature type="topological domain" description="Periplasmic" evidence="1">
    <location>
        <begin position="105"/>
        <end position="110"/>
    </location>
</feature>
<feature type="transmembrane region" description="Helical; Name=4" evidence="1">
    <location>
        <begin position="111"/>
        <end position="127"/>
    </location>
</feature>
<feature type="topological domain" description="Cytoplasmic" evidence="1">
    <location>
        <begin position="128"/>
        <end position="140"/>
    </location>
</feature>
<feature type="transmembrane region" description="Helical; Name=5" evidence="1">
    <location>
        <begin position="141"/>
        <end position="160"/>
    </location>
</feature>
<feature type="topological domain" description="Periplasmic" evidence="1">
    <location>
        <begin position="161"/>
        <end position="199"/>
    </location>
</feature>
<feature type="transmembrane region" description="Helical; Name=6" evidence="1">
    <location>
        <begin position="200"/>
        <end position="220"/>
    </location>
</feature>
<feature type="topological domain" description="Cytoplasmic" evidence="4 6">
    <location>
        <begin position="221"/>
        <end position="417"/>
    </location>
</feature>
<feature type="domain" description="RCK N-terminal" evidence="2">
    <location>
        <begin position="243"/>
        <end position="363"/>
    </location>
</feature>
<feature type="short sequence motif" description="Selectivity filter">
    <location>
        <begin position="185"/>
        <end position="190"/>
    </location>
</feature>
<feature type="sequence variant" description="In strain: ECOR 52 and ECOR 60.">
    <original>A</original>
    <variation>T</variation>
    <location>
        <position position="5"/>
    </location>
</feature>
<feature type="sequence variant" description="In strain: ECOR 52 and ECOR 60.">
    <original>N</original>
    <variation>K</variation>
    <location>
        <position position="13"/>
    </location>
</feature>
<feature type="sequence variant" description="In strain: ECOR 4.">
    <original>P</original>
    <variation>S</variation>
    <location>
        <position position="223"/>
    </location>
</feature>
<feature type="sequence variant" description="In strain: ECOR 4, ECOR 16, ECOR 28, ECOR 31, ECOR 37, ECOR 46, ECOR 50, ECOR 52, ECOR 60 and ECOR 71.">
    <original>L</original>
    <variation>Q</variation>
    <location>
        <position position="405"/>
    </location>
</feature>
<feature type="sequence variant" description="In strain: ECOR 46.">
    <original>E</original>
    <variation>K</variation>
    <location>
        <position position="406"/>
    </location>
</feature>
<feature type="sequence variant" description="In strain: ECOR 46.">
    <original>S</original>
    <variation>N</variation>
    <location>
        <position position="411"/>
    </location>
</feature>
<feature type="sequence variant" description="In strain: ECOR 46.">
    <original>S</original>
    <variation>L</variation>
    <location>
        <position position="414"/>
    </location>
</feature>
<feature type="sequence variant" description="In strain: ECOR 28.">
    <original>A</original>
    <variation>V</variation>
    <location>
        <position position="415"/>
    </location>
</feature>
<feature type="strand" evidence="8">
    <location>
        <begin position="246"/>
        <end position="249"/>
    </location>
</feature>
<feature type="helix" evidence="8">
    <location>
        <begin position="253"/>
        <end position="264"/>
    </location>
</feature>
<feature type="strand" evidence="8">
    <location>
        <begin position="269"/>
        <end position="273"/>
    </location>
</feature>
<feature type="helix" evidence="8">
    <location>
        <begin position="277"/>
        <end position="287"/>
    </location>
</feature>
<feature type="strand" evidence="8">
    <location>
        <begin position="292"/>
        <end position="296"/>
    </location>
</feature>
<feature type="helix" evidence="8">
    <location>
        <begin position="301"/>
        <end position="307"/>
    </location>
</feature>
<feature type="turn" evidence="8">
    <location>
        <begin position="308"/>
        <end position="311"/>
    </location>
</feature>
<feature type="strand" evidence="8">
    <location>
        <begin position="313"/>
        <end position="317"/>
    </location>
</feature>
<feature type="helix" evidence="8">
    <location>
        <begin position="322"/>
        <end position="335"/>
    </location>
</feature>
<feature type="strand" evidence="8">
    <location>
        <begin position="337"/>
        <end position="339"/>
    </location>
</feature>
<feature type="strand" evidence="8">
    <location>
        <begin position="341"/>
        <end position="344"/>
    </location>
</feature>
<feature type="helix" evidence="8">
    <location>
        <begin position="348"/>
        <end position="350"/>
    </location>
</feature>
<feature type="helix" evidence="8">
    <location>
        <begin position="351"/>
        <end position="355"/>
    </location>
</feature>
<feature type="strand" evidence="8">
    <location>
        <begin position="360"/>
        <end position="363"/>
    </location>
</feature>
<feature type="helix" evidence="8">
    <location>
        <begin position="365"/>
        <end position="377"/>
    </location>
</feature>
<feature type="helix" evidence="8">
    <location>
        <begin position="384"/>
        <end position="389"/>
    </location>
</feature>
<dbReference type="EMBL" id="L12044">
    <property type="protein sequence ID" value="AAA66947.1"/>
    <property type="molecule type" value="Genomic_DNA"/>
</dbReference>
<dbReference type="EMBL" id="U24195">
    <property type="protein sequence ID" value="AAB60071.1"/>
    <property type="molecule type" value="Genomic_DNA"/>
</dbReference>
<dbReference type="EMBL" id="U24196">
    <property type="protein sequence ID" value="AAB60079.1"/>
    <property type="molecule type" value="Genomic_DNA"/>
</dbReference>
<dbReference type="EMBL" id="U24197">
    <property type="protein sequence ID" value="AAB60087.1"/>
    <property type="molecule type" value="Genomic_DNA"/>
</dbReference>
<dbReference type="EMBL" id="U24198">
    <property type="protein sequence ID" value="AAB60095.1"/>
    <property type="molecule type" value="Genomic_DNA"/>
</dbReference>
<dbReference type="EMBL" id="U24199">
    <property type="protein sequence ID" value="AAB60103.1"/>
    <property type="molecule type" value="Genomic_DNA"/>
</dbReference>
<dbReference type="EMBL" id="U24200">
    <property type="protein sequence ID" value="AAB60111.1"/>
    <property type="molecule type" value="Genomic_DNA"/>
</dbReference>
<dbReference type="EMBL" id="U24201">
    <property type="protein sequence ID" value="AAB60119.1"/>
    <property type="molecule type" value="Genomic_DNA"/>
</dbReference>
<dbReference type="EMBL" id="U24202">
    <property type="protein sequence ID" value="AAB60127.1"/>
    <property type="molecule type" value="Genomic_DNA"/>
</dbReference>
<dbReference type="EMBL" id="U24203">
    <property type="protein sequence ID" value="AAB60135.1"/>
    <property type="molecule type" value="Genomic_DNA"/>
</dbReference>
<dbReference type="EMBL" id="U24204">
    <property type="protein sequence ID" value="AAB60143.1"/>
    <property type="molecule type" value="Genomic_DNA"/>
</dbReference>
<dbReference type="EMBL" id="U24205">
    <property type="protein sequence ID" value="AAB60151.1"/>
    <property type="molecule type" value="Genomic_DNA"/>
</dbReference>
<dbReference type="EMBL" id="U24206">
    <property type="protein sequence ID" value="AAB60159.1"/>
    <property type="molecule type" value="Genomic_DNA"/>
</dbReference>
<dbReference type="EMBL" id="U00096">
    <property type="protein sequence ID" value="AAC74332.1"/>
    <property type="molecule type" value="Genomic_DNA"/>
</dbReference>
<dbReference type="EMBL" id="AP009048">
    <property type="protein sequence ID" value="BAA14782.1"/>
    <property type="molecule type" value="Genomic_DNA"/>
</dbReference>
<dbReference type="PIR" id="A55252">
    <property type="entry name" value="A55252"/>
</dbReference>
<dbReference type="PIR" id="T45507">
    <property type="entry name" value="T45507"/>
</dbReference>
<dbReference type="RefSeq" id="NP_415766.1">
    <property type="nucleotide sequence ID" value="NC_000913.3"/>
</dbReference>
<dbReference type="RefSeq" id="WP_001295624.1">
    <property type="nucleotide sequence ID" value="NZ_SSZK01000031.1"/>
</dbReference>
<dbReference type="PDB" id="1ID1">
    <property type="method" value="X-ray"/>
    <property type="resolution" value="2.40 A"/>
    <property type="chains" value="A/B=241-393"/>
</dbReference>
<dbReference type="PDBsum" id="1ID1"/>
<dbReference type="EMDB" id="EMD-2709"/>
<dbReference type="EMDB" id="EMD-2710"/>
<dbReference type="SMR" id="P31069"/>
<dbReference type="BioGRID" id="4261503">
    <property type="interactions" value="47"/>
</dbReference>
<dbReference type="DIP" id="DIP-10055N"/>
<dbReference type="FunCoup" id="P31069">
    <property type="interactions" value="34"/>
</dbReference>
<dbReference type="IntAct" id="P31069">
    <property type="interactions" value="1"/>
</dbReference>
<dbReference type="STRING" id="511145.b1250"/>
<dbReference type="TCDB" id="1.A.1.13.1">
    <property type="family name" value="the voltage-gated ion channel (vic) superfamily"/>
</dbReference>
<dbReference type="jPOST" id="P31069"/>
<dbReference type="PaxDb" id="511145-b1250"/>
<dbReference type="EnsemblBacteria" id="AAC74332">
    <property type="protein sequence ID" value="AAC74332"/>
    <property type="gene ID" value="b1250"/>
</dbReference>
<dbReference type="GeneID" id="945841"/>
<dbReference type="KEGG" id="ecj:JW1242"/>
<dbReference type="KEGG" id="eco:b1250"/>
<dbReference type="KEGG" id="ecoc:C3026_07345"/>
<dbReference type="PATRIC" id="fig|1411691.4.peg.1033"/>
<dbReference type="EchoBASE" id="EB1563"/>
<dbReference type="eggNOG" id="COG1226">
    <property type="taxonomic scope" value="Bacteria"/>
</dbReference>
<dbReference type="HOGENOM" id="CLU_057267_1_0_6"/>
<dbReference type="InParanoid" id="P31069"/>
<dbReference type="OMA" id="RAGWWAT"/>
<dbReference type="OrthoDB" id="9799090at2"/>
<dbReference type="PhylomeDB" id="P31069"/>
<dbReference type="BioCyc" id="EcoCyc:KCH-MONOMER"/>
<dbReference type="BioCyc" id="MetaCyc:KCH-MONOMER"/>
<dbReference type="EvolutionaryTrace" id="P31069"/>
<dbReference type="PRO" id="PR:P31069"/>
<dbReference type="Proteomes" id="UP000000625">
    <property type="component" value="Chromosome"/>
</dbReference>
<dbReference type="GO" id="GO:0005886">
    <property type="term" value="C:plasma membrane"/>
    <property type="evidence" value="ECO:0000314"/>
    <property type="project" value="EcoCyc"/>
</dbReference>
<dbReference type="GO" id="GO:0032991">
    <property type="term" value="C:protein-containing complex"/>
    <property type="evidence" value="ECO:0000314"/>
    <property type="project" value="EcoCyc"/>
</dbReference>
<dbReference type="GO" id="GO:0042802">
    <property type="term" value="F:identical protein binding"/>
    <property type="evidence" value="ECO:0000314"/>
    <property type="project" value="EcoCyc"/>
</dbReference>
<dbReference type="GO" id="GO:0005267">
    <property type="term" value="F:potassium channel activity"/>
    <property type="evidence" value="ECO:0000315"/>
    <property type="project" value="CACAO"/>
</dbReference>
<dbReference type="GO" id="GO:0006813">
    <property type="term" value="P:potassium ion transport"/>
    <property type="evidence" value="ECO:0000315"/>
    <property type="project" value="EcoCyc"/>
</dbReference>
<dbReference type="Gene3D" id="1.10.287.70">
    <property type="match status" value="1"/>
</dbReference>
<dbReference type="Gene3D" id="3.40.50.720">
    <property type="entry name" value="NAD(P)-binding Rossmann-like Domain"/>
    <property type="match status" value="1"/>
</dbReference>
<dbReference type="InterPro" id="IPR013099">
    <property type="entry name" value="K_chnl_dom"/>
</dbReference>
<dbReference type="InterPro" id="IPR036291">
    <property type="entry name" value="NAD(P)-bd_dom_sf"/>
</dbReference>
<dbReference type="InterPro" id="IPR003148">
    <property type="entry name" value="RCK_N"/>
</dbReference>
<dbReference type="InterPro" id="IPR050721">
    <property type="entry name" value="Trk_Ktr_HKT_K-transport"/>
</dbReference>
<dbReference type="NCBIfam" id="NF007828">
    <property type="entry name" value="PRK10537.1"/>
    <property type="match status" value="1"/>
</dbReference>
<dbReference type="PANTHER" id="PTHR43833">
    <property type="entry name" value="POTASSIUM CHANNEL PROTEIN 2-RELATED-RELATED"/>
    <property type="match status" value="1"/>
</dbReference>
<dbReference type="PANTHER" id="PTHR43833:SF11">
    <property type="entry name" value="VOLTAGE-GATED POTASSIUM CHANNEL KCH"/>
    <property type="match status" value="1"/>
</dbReference>
<dbReference type="Pfam" id="PF07885">
    <property type="entry name" value="Ion_trans_2"/>
    <property type="match status" value="1"/>
</dbReference>
<dbReference type="Pfam" id="PF02254">
    <property type="entry name" value="TrkA_N"/>
    <property type="match status" value="1"/>
</dbReference>
<dbReference type="SUPFAM" id="SSF51735">
    <property type="entry name" value="NAD(P)-binding Rossmann-fold domains"/>
    <property type="match status" value="1"/>
</dbReference>
<dbReference type="SUPFAM" id="SSF81324">
    <property type="entry name" value="Voltage-gated potassium channels"/>
    <property type="match status" value="1"/>
</dbReference>
<dbReference type="PROSITE" id="PS51201">
    <property type="entry name" value="RCK_N"/>
    <property type="match status" value="1"/>
</dbReference>
<sequence>MSHWATFKQTATNLWVTLRHDILALAVFLNGLLIFKTIYGMSVNLLDIFHIKAFSELDLSLLANAPLFMLGVFLVLNSIGLLFRAKLAWAISIILLLIALIYTLHFYPWLKFSIGFCIFTLVFLLILRKDFSHSSAAAGTIFAFISFTTLLFYSTYGALYLSEGFNPRIESLMTAFYFSIETMSTVGYGDIVPVSESARLFTISVIISGITVFATSMTSIFGPLIRGGFNKLVKGNNHTMHRKDHFIVCGHSILAINTILQLNQRGQNVTVISNLPEDDIKQLEQRLGDNADVIPGDSNDSSVLKKAGIDRCRAILALSDNDADNAFVVLSAKDMSSDVKTVLAVSDSKNLNKIKMVHPDIILSPQLFGSEILARVLNGEEINNDMLVSMLLNSGHGIFSDNDELETKADSKESAQK</sequence>
<reference key="1">
    <citation type="journal article" date="1994" name="Proc. Natl. Acad. Sci. U.S.A.">
        <title>An Escherichia coli homologue of eukaryotic potassium channel proteins.</title>
        <authorList>
            <person name="Milkman R."/>
        </authorList>
    </citation>
    <scope>NUCLEOTIDE SEQUENCE [GENOMIC DNA]</scope>
    <scope>FUNCTION</scope>
    <source>
        <strain>K12 / W3110 / ATCC 27325 / DSM 5911</strain>
    </source>
</reference>
<reference key="2">
    <citation type="submission" date="1995-04" db="EMBL/GenBank/DDBJ databases">
        <authorList>
            <person name="Milkman R."/>
        </authorList>
    </citation>
    <scope>NUCLEOTIDE SEQUENCE [GENOMIC DNA]</scope>
    <source>
        <strain>K12</strain>
        <strain>Various ECOR strains</strain>
    </source>
</reference>
<reference key="3">
    <citation type="journal article" date="1996" name="DNA Res.">
        <title>A 570-kb DNA sequence of the Escherichia coli K-12 genome corresponding to the 28.0-40.1 min region on the linkage map.</title>
        <authorList>
            <person name="Aiba H."/>
            <person name="Baba T."/>
            <person name="Fujita K."/>
            <person name="Hayashi K."/>
            <person name="Inada T."/>
            <person name="Isono K."/>
            <person name="Itoh T."/>
            <person name="Kasai H."/>
            <person name="Kashimoto K."/>
            <person name="Kimura S."/>
            <person name="Kitakawa M."/>
            <person name="Kitagawa M."/>
            <person name="Makino K."/>
            <person name="Miki T."/>
            <person name="Mizobuchi K."/>
            <person name="Mori H."/>
            <person name="Mori T."/>
            <person name="Motomura K."/>
            <person name="Nakade S."/>
            <person name="Nakamura Y."/>
            <person name="Nashimoto H."/>
            <person name="Nishio Y."/>
            <person name="Oshima T."/>
            <person name="Saito N."/>
            <person name="Sampei G."/>
            <person name="Seki Y."/>
            <person name="Sivasundaram S."/>
            <person name="Tagami H."/>
            <person name="Takeda J."/>
            <person name="Takemoto K."/>
            <person name="Takeuchi Y."/>
            <person name="Wada C."/>
            <person name="Yamamoto Y."/>
            <person name="Horiuchi T."/>
        </authorList>
    </citation>
    <scope>NUCLEOTIDE SEQUENCE [LARGE SCALE GENOMIC DNA]</scope>
    <source>
        <strain>K12 / W3110 / ATCC 27325 / DSM 5911</strain>
    </source>
</reference>
<reference key="4">
    <citation type="journal article" date="1997" name="Science">
        <title>The complete genome sequence of Escherichia coli K-12.</title>
        <authorList>
            <person name="Blattner F.R."/>
            <person name="Plunkett G. III"/>
            <person name="Bloch C.A."/>
            <person name="Perna N.T."/>
            <person name="Burland V."/>
            <person name="Riley M."/>
            <person name="Collado-Vides J."/>
            <person name="Glasner J.D."/>
            <person name="Rode C.K."/>
            <person name="Mayhew G.F."/>
            <person name="Gregor J."/>
            <person name="Davis N.W."/>
            <person name="Kirkpatrick H.A."/>
            <person name="Goeden M.A."/>
            <person name="Rose D.J."/>
            <person name="Mau B."/>
            <person name="Shao Y."/>
        </authorList>
    </citation>
    <scope>NUCLEOTIDE SEQUENCE [LARGE SCALE GENOMIC DNA]</scope>
    <source>
        <strain>K12 / MG1655 / ATCC 47076</strain>
    </source>
</reference>
<reference key="5">
    <citation type="journal article" date="2006" name="Mol. Syst. Biol.">
        <title>Highly accurate genome sequences of Escherichia coli K-12 strains MG1655 and W3110.</title>
        <authorList>
            <person name="Hayashi K."/>
            <person name="Morooka N."/>
            <person name="Yamamoto Y."/>
            <person name="Fujita K."/>
            <person name="Isono K."/>
            <person name="Choi S."/>
            <person name="Ohtsubo E."/>
            <person name="Baba T."/>
            <person name="Wanner B.L."/>
            <person name="Mori H."/>
            <person name="Horiuchi T."/>
        </authorList>
    </citation>
    <scope>NUCLEOTIDE SEQUENCE [LARGE SCALE GENOMIC DNA]</scope>
    <source>
        <strain>K12 / W3110 / ATCC 27325 / DSM 5911</strain>
    </source>
</reference>
<reference key="6">
    <citation type="journal article" date="1996" name="J. Biol. Chem.">
        <title>Membrane topology of Kch, a putative K+ channel from Escherichia coli.</title>
        <authorList>
            <person name="Johansson M."/>
            <person name="von Heijne G."/>
        </authorList>
    </citation>
    <scope>SUBCELLULAR LOCATION</scope>
    <scope>TOPOLOGY</scope>
    <source>
        <strain>K12</strain>
    </source>
</reference>
<reference key="7">
    <citation type="journal article" date="2003" name="EMBO J.">
        <title>Gain-of-function mutations indicate that Escherichia coli Kch forms a functional K+ conduit in vivo.</title>
        <authorList>
            <person name="Kuo M.M."/>
            <person name="Saimi Y."/>
            <person name="Kung C."/>
        </authorList>
    </citation>
    <scope>FUNCTION</scope>
</reference>
<reference key="8">
    <citation type="journal article" date="2005" name="Science">
        <title>Global topology analysis of the Escherichia coli inner membrane proteome.</title>
        <authorList>
            <person name="Daley D.O."/>
            <person name="Rapp M."/>
            <person name="Granseth E."/>
            <person name="Melen K."/>
            <person name="Drew D."/>
            <person name="von Heijne G."/>
        </authorList>
    </citation>
    <scope>TOPOLOGY [LARGE SCALE ANALYSIS]</scope>
    <source>
        <strain>K12 / MG1655 / ATCC 47076</strain>
    </source>
</reference>
<reference key="9">
    <citation type="journal article" date="2001" name="Neuron">
        <title>Structure of the RCK domain from the E. coli K+ channel and demonstration of its presence in the human BK channel.</title>
        <authorList>
            <person name="Jiang Y."/>
            <person name="Pico A."/>
            <person name="Cadene M."/>
            <person name="Chait B.T."/>
            <person name="MacKinnon R."/>
        </authorList>
    </citation>
    <scope>X-RAY CRYSTALLOGRAPHY (2.4 ANGSTROMS) OF 241-393</scope>
    <scope>DIMERIZATION</scope>
</reference>
<accession>P31069</accession>
<accession>P94716</accession>
<accession>P94717</accession>
<accession>P94723</accession>
<accession>P94729</accession>
<accession>P97198</accession>
<accession>P97225</accession>
<gene>
    <name type="primary">kch</name>
    <name type="ordered locus">b1250</name>
    <name type="ordered locus">JW1242</name>
</gene>